<gene>
    <name evidence="1" type="primary">CYN1</name>
    <name type="ORF">SNOG_10782</name>
</gene>
<organism>
    <name type="scientific">Phaeosphaeria nodorum (strain SN15 / ATCC MYA-4574 / FGSC 10173)</name>
    <name type="common">Glume blotch fungus</name>
    <name type="synonym">Parastagonospora nodorum</name>
    <dbReference type="NCBI Taxonomy" id="321614"/>
    <lineage>
        <taxon>Eukaryota</taxon>
        <taxon>Fungi</taxon>
        <taxon>Dikarya</taxon>
        <taxon>Ascomycota</taxon>
        <taxon>Pezizomycotina</taxon>
        <taxon>Dothideomycetes</taxon>
        <taxon>Pleosporomycetidae</taxon>
        <taxon>Pleosporales</taxon>
        <taxon>Pleosporineae</taxon>
        <taxon>Phaeosphaeriaceae</taxon>
        <taxon>Parastagonospora</taxon>
    </lineage>
</organism>
<reference key="1">
    <citation type="journal article" date="2007" name="Plant Cell">
        <title>Dothideomycete-plant interactions illuminated by genome sequencing and EST analysis of the wheat pathogen Stagonospora nodorum.</title>
        <authorList>
            <person name="Hane J.K."/>
            <person name="Lowe R.G.T."/>
            <person name="Solomon P.S."/>
            <person name="Tan K.-C."/>
            <person name="Schoch C.L."/>
            <person name="Spatafora J.W."/>
            <person name="Crous P.W."/>
            <person name="Kodira C.D."/>
            <person name="Birren B.W."/>
            <person name="Galagan J.E."/>
            <person name="Torriani S.F.F."/>
            <person name="McDonald B.A."/>
            <person name="Oliver R.P."/>
        </authorList>
    </citation>
    <scope>NUCLEOTIDE SEQUENCE [LARGE SCALE GENOMIC DNA]</scope>
    <source>
        <strain>SN15 / ATCC MYA-4574 / FGSC 10173</strain>
    </source>
</reference>
<dbReference type="EC" id="4.2.1.104" evidence="1"/>
<dbReference type="EMBL" id="CH445341">
    <property type="protein sequence ID" value="EAT82176.2"/>
    <property type="status" value="ALT_INIT"/>
    <property type="molecule type" value="Genomic_DNA"/>
</dbReference>
<dbReference type="RefSeq" id="XP_001801042.1">
    <property type="nucleotide sequence ID" value="XM_001800990.1"/>
</dbReference>
<dbReference type="SMR" id="Q0UBT2"/>
<dbReference type="STRING" id="321614.Q0UBT2"/>
<dbReference type="GeneID" id="5977949"/>
<dbReference type="KEGG" id="pno:SNOG_10782"/>
<dbReference type="VEuPathDB" id="FungiDB:JI435_107820"/>
<dbReference type="eggNOG" id="ENOG502S3YJ">
    <property type="taxonomic scope" value="Eukaryota"/>
</dbReference>
<dbReference type="InParanoid" id="Q0UBT2"/>
<dbReference type="OMA" id="YELVMIN"/>
<dbReference type="OrthoDB" id="10019422at2759"/>
<dbReference type="Proteomes" id="UP000001055">
    <property type="component" value="Unassembled WGS sequence"/>
</dbReference>
<dbReference type="GO" id="GO:0008824">
    <property type="term" value="F:cyanate hydratase activity"/>
    <property type="evidence" value="ECO:0007669"/>
    <property type="project" value="UniProtKB-UniRule"/>
</dbReference>
<dbReference type="GO" id="GO:0003677">
    <property type="term" value="F:DNA binding"/>
    <property type="evidence" value="ECO:0007669"/>
    <property type="project" value="InterPro"/>
</dbReference>
<dbReference type="GO" id="GO:0009439">
    <property type="term" value="P:cyanate metabolic process"/>
    <property type="evidence" value="ECO:0007669"/>
    <property type="project" value="UniProtKB-UniRule"/>
</dbReference>
<dbReference type="CDD" id="cd00559">
    <property type="entry name" value="Cyanase_C"/>
    <property type="match status" value="1"/>
</dbReference>
<dbReference type="Gene3D" id="3.30.1160.10">
    <property type="entry name" value="Cyanate lyase, C-terminal domain"/>
    <property type="match status" value="1"/>
</dbReference>
<dbReference type="Gene3D" id="1.10.260.40">
    <property type="entry name" value="lambda repressor-like DNA-binding domains"/>
    <property type="match status" value="1"/>
</dbReference>
<dbReference type="HAMAP" id="MF_00535">
    <property type="entry name" value="Cyanate_hydrat"/>
    <property type="match status" value="1"/>
</dbReference>
<dbReference type="InterPro" id="IPR001387">
    <property type="entry name" value="Cro/C1-type_HTH"/>
</dbReference>
<dbReference type="InterPro" id="IPR008076">
    <property type="entry name" value="Cyanase"/>
</dbReference>
<dbReference type="InterPro" id="IPR003712">
    <property type="entry name" value="Cyanate_lyase_C"/>
</dbReference>
<dbReference type="InterPro" id="IPR036581">
    <property type="entry name" value="Cyanate_lyase_C_sf"/>
</dbReference>
<dbReference type="InterPro" id="IPR010982">
    <property type="entry name" value="Lambda_DNA-bd_dom_sf"/>
</dbReference>
<dbReference type="NCBIfam" id="TIGR00673">
    <property type="entry name" value="cynS"/>
    <property type="match status" value="1"/>
</dbReference>
<dbReference type="NCBIfam" id="NF002773">
    <property type="entry name" value="PRK02866.1"/>
    <property type="match status" value="1"/>
</dbReference>
<dbReference type="PANTHER" id="PTHR34186">
    <property type="entry name" value="CYANATE HYDRATASE"/>
    <property type="match status" value="1"/>
</dbReference>
<dbReference type="PANTHER" id="PTHR34186:SF2">
    <property type="entry name" value="CYANATE HYDRATASE"/>
    <property type="match status" value="1"/>
</dbReference>
<dbReference type="Pfam" id="PF02560">
    <property type="entry name" value="Cyanate_lyase"/>
    <property type="match status" value="1"/>
</dbReference>
<dbReference type="Pfam" id="PF01381">
    <property type="entry name" value="HTH_3"/>
    <property type="match status" value="1"/>
</dbReference>
<dbReference type="PIRSF" id="PIRSF001263">
    <property type="entry name" value="Cyanate_hydratas"/>
    <property type="match status" value="1"/>
</dbReference>
<dbReference type="PRINTS" id="PR01693">
    <property type="entry name" value="CYANASE"/>
</dbReference>
<dbReference type="SMART" id="SM01116">
    <property type="entry name" value="Cyanate_lyase"/>
    <property type="match status" value="1"/>
</dbReference>
<dbReference type="SMART" id="SM00530">
    <property type="entry name" value="HTH_XRE"/>
    <property type="match status" value="1"/>
</dbReference>
<dbReference type="SUPFAM" id="SSF55234">
    <property type="entry name" value="Cyanase C-terminal domain"/>
    <property type="match status" value="1"/>
</dbReference>
<dbReference type="SUPFAM" id="SSF47413">
    <property type="entry name" value="lambda repressor-like DNA-binding domains"/>
    <property type="match status" value="1"/>
</dbReference>
<accession>Q0UBT2</accession>
<feature type="chain" id="PRO_0000403263" description="Cyanate hydratase">
    <location>
        <begin position="1"/>
        <end position="162"/>
    </location>
</feature>
<feature type="active site" evidence="1">
    <location>
        <position position="103"/>
    </location>
</feature>
<feature type="active site" evidence="1">
    <location>
        <position position="106"/>
    </location>
</feature>
<feature type="active site" evidence="1">
    <location>
        <position position="129"/>
    </location>
</feature>
<evidence type="ECO:0000255" key="1">
    <source>
        <dbReference type="HAMAP-Rule" id="MF_03139"/>
    </source>
</evidence>
<evidence type="ECO:0000305" key="2"/>
<keyword id="KW-0456">Lyase</keyword>
<proteinExistence type="inferred from homology"/>
<protein>
    <recommendedName>
        <fullName evidence="1">Cyanate hydratase</fullName>
        <shortName evidence="1">Cyanase</shortName>
        <ecNumber evidence="1">4.2.1.104</ecNumber>
    </recommendedName>
    <alternativeName>
        <fullName evidence="1">Cyanate hydrolase</fullName>
    </alternativeName>
    <alternativeName>
        <fullName evidence="1">Cyanate lyase</fullName>
    </alternativeName>
</protein>
<comment type="function">
    <text evidence="1">Catalyzes the reaction of cyanate with bicarbonate to produce ammonia and carbon dioxide.</text>
</comment>
<comment type="catalytic activity">
    <reaction evidence="1">
        <text>cyanate + hydrogencarbonate + 3 H(+) = NH4(+) + 2 CO2</text>
        <dbReference type="Rhea" id="RHEA:11120"/>
        <dbReference type="ChEBI" id="CHEBI:15378"/>
        <dbReference type="ChEBI" id="CHEBI:16526"/>
        <dbReference type="ChEBI" id="CHEBI:17544"/>
        <dbReference type="ChEBI" id="CHEBI:28938"/>
        <dbReference type="ChEBI" id="CHEBI:29195"/>
        <dbReference type="EC" id="4.2.1.104"/>
    </reaction>
</comment>
<comment type="similarity">
    <text evidence="1">Belongs to the cyanase family.</text>
</comment>
<comment type="sequence caution" evidence="2">
    <conflict type="erroneous initiation">
        <sequence resource="EMBL-CDS" id="EAT82176"/>
    </conflict>
    <text>Extended N-terminus.</text>
</comment>
<sequence>MSEHPVATLQEDIAPRLPLSSLTLFEAKKKKNLSFEAIAQAVGRNEVAIAALFYGQAMASPEDIKALSKVLDIPVEVLESQLSGFPDRGRSLEMPPKDPLVYRLYEIVQNYGPAYKAILNEKFGDGIMSAISFSTKVEKETDEKGEWAKITLRGKWLPYSRF</sequence>
<name>CYNS_PHANO</name>